<protein>
    <recommendedName>
        <fullName>Transmembrane emp24 domain-containing protein 1</fullName>
    </recommendedName>
    <alternativeName>
        <fullName>p24 family protein gamma-1</fullName>
        <shortName>p24gamma1</shortName>
    </alternativeName>
</protein>
<name>TMED1_XENTR</name>
<accession>Q28BQ6</accession>
<accession>Q0IHR8</accession>
<keyword id="KW-1003">Cell membrane</keyword>
<keyword id="KW-0175">Coiled coil</keyword>
<keyword id="KW-0256">Endoplasmic reticulum</keyword>
<keyword id="KW-0333">Golgi apparatus</keyword>
<keyword id="KW-0472">Membrane</keyword>
<keyword id="KW-0653">Protein transport</keyword>
<keyword id="KW-1185">Reference proteome</keyword>
<keyword id="KW-0732">Signal</keyword>
<keyword id="KW-0812">Transmembrane</keyword>
<keyword id="KW-1133">Transmembrane helix</keyword>
<keyword id="KW-0813">Transport</keyword>
<comment type="function">
    <text evidence="1">Potential role in vesicular protein trafficking, mainly in the early secretory pathway. May act as a cargo receptor at the lumenal side for incorporation of secretory cargo molecules into transport vesicles and may be involved in vesicle coat formation at the cytoplasmic side. Plays a positive role in IL-33-mediated IL-8 and IL-6 production by interacting with interleukin-33 receptor IL1RL1. Plays also a role in the modulation of innate immune signaling through the cGAS-STING pathway by interacting with RNF26.</text>
</comment>
<comment type="subunit">
    <text evidence="1">Homodimer in endoplasmic reticulum, endoplasmic reticulum-Golgi intermediate compartment and cis-Golgi network. Interacts with IL1RL1. Interacts with RNF26; this interaction is important to modulate innate immune signaling through the cGAS-STING pathway.</text>
</comment>
<comment type="subcellular location">
    <subcellularLocation>
        <location evidence="1">Cell membrane</location>
        <topology evidence="2">Single-pass type I membrane protein</topology>
    </subcellularLocation>
    <subcellularLocation>
        <location evidence="1">Endoplasmic reticulum membrane</location>
        <topology evidence="2">Single-pass type I membrane protein</topology>
    </subcellularLocation>
    <subcellularLocation>
        <location evidence="1">Golgi apparatus</location>
        <location evidence="1">cis-Golgi network membrane</location>
        <topology evidence="2">Single-pass type I membrane protein</topology>
    </subcellularLocation>
    <subcellularLocation>
        <location evidence="1">Endoplasmic reticulum-Golgi intermediate compartment membrane</location>
        <topology evidence="2">Single-pass type I membrane protein</topology>
    </subcellularLocation>
</comment>
<comment type="similarity">
    <text evidence="4">Belongs to the EMP24/GP25L family.</text>
</comment>
<evidence type="ECO:0000250" key="1">
    <source>
        <dbReference type="UniProtKB" id="Q13445"/>
    </source>
</evidence>
<evidence type="ECO:0000255" key="2"/>
<evidence type="ECO:0000255" key="3">
    <source>
        <dbReference type="PROSITE-ProRule" id="PRU00096"/>
    </source>
</evidence>
<evidence type="ECO:0000305" key="4"/>
<organism>
    <name type="scientific">Xenopus tropicalis</name>
    <name type="common">Western clawed frog</name>
    <name type="synonym">Silurana tropicalis</name>
    <dbReference type="NCBI Taxonomy" id="8364"/>
    <lineage>
        <taxon>Eukaryota</taxon>
        <taxon>Metazoa</taxon>
        <taxon>Chordata</taxon>
        <taxon>Craniata</taxon>
        <taxon>Vertebrata</taxon>
        <taxon>Euteleostomi</taxon>
        <taxon>Amphibia</taxon>
        <taxon>Batrachia</taxon>
        <taxon>Anura</taxon>
        <taxon>Pipoidea</taxon>
        <taxon>Pipidae</taxon>
        <taxon>Xenopodinae</taxon>
        <taxon>Xenopus</taxon>
        <taxon>Silurana</taxon>
    </lineage>
</organism>
<feature type="signal peptide" evidence="2">
    <location>
        <begin position="1"/>
        <end position="19"/>
    </location>
</feature>
<feature type="chain" id="PRO_0000248023" description="Transmembrane emp24 domain-containing protein 1">
    <location>
        <begin position="20"/>
        <end position="220"/>
    </location>
</feature>
<feature type="topological domain" description="Extracellular" evidence="2">
    <location>
        <begin position="20"/>
        <end position="187"/>
    </location>
</feature>
<feature type="transmembrane region" description="Helical" evidence="2">
    <location>
        <begin position="188"/>
        <end position="208"/>
    </location>
</feature>
<feature type="topological domain" description="Cytoplasmic" evidence="2">
    <location>
        <begin position="209"/>
        <end position="220"/>
    </location>
</feature>
<feature type="domain" description="GOLD" evidence="3">
    <location>
        <begin position="36"/>
        <end position="118"/>
    </location>
</feature>
<feature type="coiled-coil region" evidence="2">
    <location>
        <begin position="138"/>
        <end position="164"/>
    </location>
</feature>
<feature type="short sequence motif" description="COPI vesicle coat-binding" evidence="2">
    <location>
        <begin position="211"/>
        <end position="220"/>
    </location>
</feature>
<feature type="short sequence motif" description="COPII vesicle coat-binding" evidence="2">
    <location>
        <begin position="211"/>
        <end position="212"/>
    </location>
</feature>
<reference key="1">
    <citation type="submission" date="2006-06" db="EMBL/GenBank/DDBJ databases">
        <authorList>
            <consortium name="Sanger Xenopus tropicalis EST/cDNA project"/>
        </authorList>
    </citation>
    <scope>NUCLEOTIDE SEQUENCE [LARGE SCALE MRNA]</scope>
    <source>
        <tissue>Neurula</tissue>
    </source>
</reference>
<reference key="2">
    <citation type="submission" date="2006-09" db="EMBL/GenBank/DDBJ databases">
        <authorList>
            <consortium name="NIH - Xenopus Gene Collection (XGC) project"/>
        </authorList>
    </citation>
    <scope>NUCLEOTIDE SEQUENCE [LARGE SCALE MRNA]</scope>
    <source>
        <tissue>Brain</tissue>
    </source>
</reference>
<dbReference type="EMBL" id="CR942696">
    <property type="protein sequence ID" value="CAJ83286.1"/>
    <property type="molecule type" value="mRNA"/>
</dbReference>
<dbReference type="EMBL" id="BC123004">
    <property type="protein sequence ID" value="AAI23005.1"/>
    <property type="molecule type" value="mRNA"/>
</dbReference>
<dbReference type="RefSeq" id="NP_001039263.1">
    <property type="nucleotide sequence ID" value="NM_001045798.1"/>
</dbReference>
<dbReference type="SMR" id="Q28BQ6"/>
<dbReference type="FunCoup" id="Q28BQ6">
    <property type="interactions" value="1407"/>
</dbReference>
<dbReference type="STRING" id="8364.ENSXETP00000022100"/>
<dbReference type="PaxDb" id="8364-ENSXETP00000004805"/>
<dbReference type="DNASU" id="734138"/>
<dbReference type="GeneID" id="734138"/>
<dbReference type="KEGG" id="xtr:734138"/>
<dbReference type="AGR" id="Xenbase:XB-GENE-1017173"/>
<dbReference type="CTD" id="11018"/>
<dbReference type="Xenbase" id="XB-GENE-1017173">
    <property type="gene designation" value="tmed1"/>
</dbReference>
<dbReference type="eggNOG" id="KOG3287">
    <property type="taxonomic scope" value="Eukaryota"/>
</dbReference>
<dbReference type="HOGENOM" id="CLU_066963_0_1_1"/>
<dbReference type="InParanoid" id="Q28BQ6"/>
<dbReference type="OMA" id="AGDYMIC"/>
<dbReference type="OrthoDB" id="5976732at2759"/>
<dbReference type="PhylomeDB" id="Q28BQ6"/>
<dbReference type="Proteomes" id="UP000008143">
    <property type="component" value="Chromosome 3"/>
</dbReference>
<dbReference type="Bgee" id="ENSXETG00000002260">
    <property type="expression patterns" value="Expressed in neurula embryo and 12 other cell types or tissues"/>
</dbReference>
<dbReference type="GO" id="GO:0005789">
    <property type="term" value="C:endoplasmic reticulum membrane"/>
    <property type="evidence" value="ECO:0007669"/>
    <property type="project" value="UniProtKB-SubCell"/>
</dbReference>
<dbReference type="GO" id="GO:0033116">
    <property type="term" value="C:endoplasmic reticulum-Golgi intermediate compartment membrane"/>
    <property type="evidence" value="ECO:0007669"/>
    <property type="project" value="UniProtKB-SubCell"/>
</dbReference>
<dbReference type="GO" id="GO:0005794">
    <property type="term" value="C:Golgi apparatus"/>
    <property type="evidence" value="ECO:0007669"/>
    <property type="project" value="UniProtKB-SubCell"/>
</dbReference>
<dbReference type="GO" id="GO:0005886">
    <property type="term" value="C:plasma membrane"/>
    <property type="evidence" value="ECO:0007669"/>
    <property type="project" value="UniProtKB-SubCell"/>
</dbReference>
<dbReference type="GO" id="GO:0015031">
    <property type="term" value="P:protein transport"/>
    <property type="evidence" value="ECO:0007669"/>
    <property type="project" value="UniProtKB-KW"/>
</dbReference>
<dbReference type="InterPro" id="IPR015720">
    <property type="entry name" value="Emp24-like"/>
</dbReference>
<dbReference type="InterPro" id="IPR009038">
    <property type="entry name" value="GOLD_dom"/>
</dbReference>
<dbReference type="InterPro" id="IPR036598">
    <property type="entry name" value="GOLD_dom_sf"/>
</dbReference>
<dbReference type="PANTHER" id="PTHR22811">
    <property type="entry name" value="TRANSMEMBRANE EMP24 DOMAIN-CONTAINING PROTEIN"/>
    <property type="match status" value="1"/>
</dbReference>
<dbReference type="Pfam" id="PF01105">
    <property type="entry name" value="EMP24_GP25L"/>
    <property type="match status" value="1"/>
</dbReference>
<dbReference type="SMART" id="SM01190">
    <property type="entry name" value="EMP24_GP25L"/>
    <property type="match status" value="1"/>
</dbReference>
<dbReference type="SUPFAM" id="SSF101576">
    <property type="entry name" value="Supernatant protein factor (SPF), C-terminal domain"/>
    <property type="match status" value="1"/>
</dbReference>
<dbReference type="PROSITE" id="PS50866">
    <property type="entry name" value="GOLD"/>
    <property type="match status" value="1"/>
</dbReference>
<gene>
    <name type="primary">tmed1</name>
    <name type="ORF">TNeu055d12.1</name>
</gene>
<proteinExistence type="evidence at transcript level"/>
<sequence length="220" mass="24998">MAWSSSFLFIVLPLAAAVAVQPQDTELTFLLPAGRQECFYQTTLYNGSMEIEYQVIGGAGLDVDFSVTTPSGILLIMERRRSDGVHTVEPTEAGDYMICFDNSFSTISEKLVFFELIFDNQQGDEEPDSWADVVEPDELLDIKLEDIKESIESVKSRLERSIQMQTVLRAFEARDRNLQDSNLERVNFWSAINVGVLVTVAFLQVYMLKSLFDDKRKIRT</sequence>